<name>YR7I_ECOLX</name>
<reference key="1">
    <citation type="journal article" date="1990" name="Proc. Natl. Acad. Sci. U.S.A.">
        <title>Retron for the 67-base multicopy single-stranded DNA from Escherichia coli: a potential transposable element encoding both reverse transcriptase and Dam methylase functions.</title>
        <authorList>
            <person name="Hsu M.-Y."/>
            <person name="Inouye M."/>
            <person name="Inouye S."/>
        </authorList>
    </citation>
    <scope>NUCLEOTIDE SEQUENCE [GENOMIC DNA]</scope>
    <source>
        <strain>O1:NM / CL-1</strain>
    </source>
</reference>
<feature type="chain" id="PRO_0000066461" description="Protein ORFi in retron Ec67">
    <location>
        <begin position="1"/>
        <end position="198"/>
    </location>
</feature>
<keyword id="KW-0814">Transposable element</keyword>
<evidence type="ECO:0000303" key="1">
    <source>
    </source>
</evidence>
<evidence type="ECO:0000305" key="2"/>
<comment type="similarity">
    <text evidence="2">Belongs to the CI repressor protein family.</text>
</comment>
<organism>
    <name type="scientific">Escherichia coli</name>
    <dbReference type="NCBI Taxonomy" id="562"/>
    <lineage>
        <taxon>Bacteria</taxon>
        <taxon>Pseudomonadati</taxon>
        <taxon>Pseudomonadota</taxon>
        <taxon>Gammaproteobacteria</taxon>
        <taxon>Enterobacterales</taxon>
        <taxon>Enterobacteriaceae</taxon>
        <taxon>Escherichia</taxon>
    </lineage>
</organism>
<accession>P21323</accession>
<proteinExistence type="inferred from homology"/>
<dbReference type="EMBL" id="M55249">
    <property type="protein sequence ID" value="AAA23390.1"/>
    <property type="molecule type" value="Genomic_DNA"/>
</dbReference>
<dbReference type="PIR" id="JQ0864">
    <property type="entry name" value="JQ0864"/>
</dbReference>
<dbReference type="RefSeq" id="WP_000107904.1">
    <property type="nucleotide sequence ID" value="NZ_WVVQ01000038.1"/>
</dbReference>
<dbReference type="SMR" id="P21323"/>
<dbReference type="PATRIC" id="fig|562.7429.peg.2881"/>
<dbReference type="GO" id="GO:0003677">
    <property type="term" value="F:DNA binding"/>
    <property type="evidence" value="ECO:0007669"/>
    <property type="project" value="InterPro"/>
</dbReference>
<dbReference type="GO" id="GO:0045892">
    <property type="term" value="P:negative regulation of DNA-templated transcription"/>
    <property type="evidence" value="ECO:0007669"/>
    <property type="project" value="InterPro"/>
</dbReference>
<dbReference type="GO" id="GO:0051259">
    <property type="term" value="P:protein complex oligomerization"/>
    <property type="evidence" value="ECO:0007669"/>
    <property type="project" value="InterPro"/>
</dbReference>
<dbReference type="Gene3D" id="1.10.260.40">
    <property type="entry name" value="lambda repressor-like DNA-binding domains"/>
    <property type="match status" value="1"/>
</dbReference>
<dbReference type="Gene3D" id="2.10.109.10">
    <property type="entry name" value="Umud Fragment, subunit A"/>
    <property type="match status" value="1"/>
</dbReference>
<dbReference type="InterPro" id="IPR010982">
    <property type="entry name" value="Lambda_DNA-bd_dom_sf"/>
</dbReference>
<dbReference type="InterPro" id="IPR032499">
    <property type="entry name" value="Phage_CI_C"/>
</dbReference>
<dbReference type="InterPro" id="IPR010744">
    <property type="entry name" value="Phage_CI_N"/>
</dbReference>
<dbReference type="Pfam" id="PF16452">
    <property type="entry name" value="Phage_CI_C"/>
    <property type="match status" value="1"/>
</dbReference>
<dbReference type="Pfam" id="PF07022">
    <property type="entry name" value="Phage_CI_repr"/>
    <property type="match status" value="1"/>
</dbReference>
<protein>
    <recommendedName>
        <fullName evidence="1">Protein ORFi in retron Ec67</fullName>
    </recommendedName>
</protein>
<sequence length="198" mass="21898">MSTSKYPSEIKINPNKGGKAAIERLVEAYGFTTRQALADHLEVSKSTLANRYLRDTFPADWIIQCALETGTSLKWLTTGQGLKQSSLTVATEELPKFRLTAGKMIEDGSYVFDSSFLPANLSSPIVIQDGLVTYICDQKFSEVLDGHWLINIDGTYSIRKITKLPKGMIKITTTENSFECAFSDIEVVACIRSTIVSN</sequence>